<evidence type="ECO:0000255" key="1">
    <source>
        <dbReference type="HAMAP-Rule" id="MF_01716"/>
    </source>
</evidence>
<name>RBSA_STRA3</name>
<dbReference type="EC" id="7.5.2.7" evidence="1"/>
<dbReference type="EMBL" id="AL766843">
    <property type="protein sequence ID" value="CAD45760.1"/>
    <property type="molecule type" value="Genomic_DNA"/>
</dbReference>
<dbReference type="RefSeq" id="WP_000687221.1">
    <property type="nucleotide sequence ID" value="NC_004368.1"/>
</dbReference>
<dbReference type="SMR" id="Q8E7N9"/>
<dbReference type="KEGG" id="san:gbs0115"/>
<dbReference type="eggNOG" id="COG1129">
    <property type="taxonomic scope" value="Bacteria"/>
</dbReference>
<dbReference type="HOGENOM" id="CLU_000604_92_3_9"/>
<dbReference type="Proteomes" id="UP000000823">
    <property type="component" value="Chromosome"/>
</dbReference>
<dbReference type="GO" id="GO:0005886">
    <property type="term" value="C:plasma membrane"/>
    <property type="evidence" value="ECO:0007669"/>
    <property type="project" value="UniProtKB-SubCell"/>
</dbReference>
<dbReference type="GO" id="GO:0015611">
    <property type="term" value="F:ABC-type D-ribose transporter activity"/>
    <property type="evidence" value="ECO:0007669"/>
    <property type="project" value="UniProtKB-EC"/>
</dbReference>
<dbReference type="GO" id="GO:0005524">
    <property type="term" value="F:ATP binding"/>
    <property type="evidence" value="ECO:0007669"/>
    <property type="project" value="UniProtKB-KW"/>
</dbReference>
<dbReference type="GO" id="GO:0016887">
    <property type="term" value="F:ATP hydrolysis activity"/>
    <property type="evidence" value="ECO:0007669"/>
    <property type="project" value="InterPro"/>
</dbReference>
<dbReference type="CDD" id="cd03216">
    <property type="entry name" value="ABC_Carb_Monos_I"/>
    <property type="match status" value="1"/>
</dbReference>
<dbReference type="CDD" id="cd03215">
    <property type="entry name" value="ABC_Carb_Monos_II"/>
    <property type="match status" value="1"/>
</dbReference>
<dbReference type="FunFam" id="3.40.50.300:FF:000126">
    <property type="entry name" value="Galactose/methyl galactoside import ATP-binding protein MglA"/>
    <property type="match status" value="1"/>
</dbReference>
<dbReference type="FunFam" id="3.40.50.300:FF:000127">
    <property type="entry name" value="Ribose import ATP-binding protein RbsA"/>
    <property type="match status" value="1"/>
</dbReference>
<dbReference type="Gene3D" id="3.40.50.300">
    <property type="entry name" value="P-loop containing nucleotide triphosphate hydrolases"/>
    <property type="match status" value="2"/>
</dbReference>
<dbReference type="InterPro" id="IPR003593">
    <property type="entry name" value="AAA+_ATPase"/>
</dbReference>
<dbReference type="InterPro" id="IPR050107">
    <property type="entry name" value="ABC_carbohydrate_import_ATPase"/>
</dbReference>
<dbReference type="InterPro" id="IPR003439">
    <property type="entry name" value="ABC_transporter-like_ATP-bd"/>
</dbReference>
<dbReference type="InterPro" id="IPR017871">
    <property type="entry name" value="ABC_transporter-like_CS"/>
</dbReference>
<dbReference type="InterPro" id="IPR027417">
    <property type="entry name" value="P-loop_NTPase"/>
</dbReference>
<dbReference type="PANTHER" id="PTHR43790">
    <property type="entry name" value="CARBOHYDRATE TRANSPORT ATP-BINDING PROTEIN MG119-RELATED"/>
    <property type="match status" value="1"/>
</dbReference>
<dbReference type="PANTHER" id="PTHR43790:SF3">
    <property type="entry name" value="D-ALLOSE IMPORT ATP-BINDING PROTEIN ALSA-RELATED"/>
    <property type="match status" value="1"/>
</dbReference>
<dbReference type="Pfam" id="PF00005">
    <property type="entry name" value="ABC_tran"/>
    <property type="match status" value="2"/>
</dbReference>
<dbReference type="SMART" id="SM00382">
    <property type="entry name" value="AAA"/>
    <property type="match status" value="2"/>
</dbReference>
<dbReference type="SUPFAM" id="SSF52540">
    <property type="entry name" value="P-loop containing nucleoside triphosphate hydrolases"/>
    <property type="match status" value="2"/>
</dbReference>
<dbReference type="PROSITE" id="PS00211">
    <property type="entry name" value="ABC_TRANSPORTER_1"/>
    <property type="match status" value="2"/>
</dbReference>
<dbReference type="PROSITE" id="PS50893">
    <property type="entry name" value="ABC_TRANSPORTER_2"/>
    <property type="match status" value="2"/>
</dbReference>
<dbReference type="PROSITE" id="PS51254">
    <property type="entry name" value="RBSA"/>
    <property type="match status" value="1"/>
</dbReference>
<feature type="chain" id="PRO_0000261106" description="Ribose import ATP-binding protein RbsA">
    <location>
        <begin position="1"/>
        <end position="492"/>
    </location>
</feature>
<feature type="domain" description="ABC transporter 1" evidence="1">
    <location>
        <begin position="3"/>
        <end position="239"/>
    </location>
</feature>
<feature type="domain" description="ABC transporter 2" evidence="1">
    <location>
        <begin position="238"/>
        <end position="492"/>
    </location>
</feature>
<feature type="binding site" evidence="1">
    <location>
        <begin position="35"/>
        <end position="42"/>
    </location>
    <ligand>
        <name>ATP</name>
        <dbReference type="ChEBI" id="CHEBI:30616"/>
    </ligand>
</feature>
<proteinExistence type="inferred from homology"/>
<keyword id="KW-0067">ATP-binding</keyword>
<keyword id="KW-1003">Cell membrane</keyword>
<keyword id="KW-0472">Membrane</keyword>
<keyword id="KW-0547">Nucleotide-binding</keyword>
<keyword id="KW-0677">Repeat</keyword>
<keyword id="KW-0762">Sugar transport</keyword>
<keyword id="KW-1278">Translocase</keyword>
<keyword id="KW-0813">Transport</keyword>
<sequence>MKIDMRNISKSFGTNKVLEKIDLELQSGQIHALMGENGAGKSTLMNILTGLFPASTGTIYIDGEERTFSNPQEAEEFGISFIHQEMNTWPEMTVLENLFLGREIKTTFGLLNQKLMRQKALEAFKRLGVTIPLDIPIGNLSVGQQQMIEIAKSLLNQLSILVMDEPTAALTDRETENLFRVIRSLKQEGVGIVYISHRMEEIFKITDFVTVMRDGVIVDTKETSLTNSDELVKKMVGRKLEDYYPEKHSEIGPVAFEVSNLCGDNFEDVSFYVRKGEILGFSGLMGAGRTEVMRTIFGIDKKKSGKVKIDNQEITITSPSQAIKQGIGFLTENRKDEGLILDFNIKDNMTLPSTKDFSKHGFFDEKTRTTFVQQLINRLYIKSGRPDLEVGNLSGGNQQKVVLAKWIGIAPKVLILDEPTRGVDVGAKREIYQLMNELADRGVPIVMVSSDLPEILGVSDRIMVMHEGRISGELSRKEADQEKVMQLATGGK</sequence>
<gene>
    <name evidence="1" type="primary">rbsA</name>
    <name type="ordered locus">gbs0115</name>
</gene>
<protein>
    <recommendedName>
        <fullName evidence="1">Ribose import ATP-binding protein RbsA</fullName>
        <ecNumber evidence="1">7.5.2.7</ecNumber>
    </recommendedName>
</protein>
<accession>Q8E7N9</accession>
<reference key="1">
    <citation type="journal article" date="2002" name="Mol. Microbiol.">
        <title>Genome sequence of Streptococcus agalactiae, a pathogen causing invasive neonatal disease.</title>
        <authorList>
            <person name="Glaser P."/>
            <person name="Rusniok C."/>
            <person name="Buchrieser C."/>
            <person name="Chevalier F."/>
            <person name="Frangeul L."/>
            <person name="Msadek T."/>
            <person name="Zouine M."/>
            <person name="Couve E."/>
            <person name="Lalioui L."/>
            <person name="Poyart C."/>
            <person name="Trieu-Cuot P."/>
            <person name="Kunst F."/>
        </authorList>
    </citation>
    <scope>NUCLEOTIDE SEQUENCE [LARGE SCALE GENOMIC DNA]</scope>
    <source>
        <strain>NEM316</strain>
    </source>
</reference>
<comment type="function">
    <text evidence="1">Part of the ABC transporter complex RbsABC involved in ribose import. Responsible for energy coupling to the transport system.</text>
</comment>
<comment type="catalytic activity">
    <reaction evidence="1">
        <text>D-ribose(out) + ATP + H2O = D-ribose(in) + ADP + phosphate + H(+)</text>
        <dbReference type="Rhea" id="RHEA:29903"/>
        <dbReference type="ChEBI" id="CHEBI:15377"/>
        <dbReference type="ChEBI" id="CHEBI:15378"/>
        <dbReference type="ChEBI" id="CHEBI:30616"/>
        <dbReference type="ChEBI" id="CHEBI:43474"/>
        <dbReference type="ChEBI" id="CHEBI:47013"/>
        <dbReference type="ChEBI" id="CHEBI:456216"/>
        <dbReference type="EC" id="7.5.2.7"/>
    </reaction>
</comment>
<comment type="subunit">
    <text evidence="1">The complex is composed of an ATP-binding protein (RbsA), two transmembrane proteins (RbsC) and a solute-binding protein (RbsB).</text>
</comment>
<comment type="subcellular location">
    <subcellularLocation>
        <location evidence="1">Cell membrane</location>
        <topology evidence="1">Peripheral membrane protein</topology>
    </subcellularLocation>
</comment>
<comment type="similarity">
    <text evidence="1">Belongs to the ABC transporter superfamily. Ribose importer (TC 3.A.1.2.1) family.</text>
</comment>
<organism>
    <name type="scientific">Streptococcus agalactiae serotype III (strain NEM316)</name>
    <dbReference type="NCBI Taxonomy" id="211110"/>
    <lineage>
        <taxon>Bacteria</taxon>
        <taxon>Bacillati</taxon>
        <taxon>Bacillota</taxon>
        <taxon>Bacilli</taxon>
        <taxon>Lactobacillales</taxon>
        <taxon>Streptococcaceae</taxon>
        <taxon>Streptococcus</taxon>
    </lineage>
</organism>